<name>DEOC_METTH</name>
<keyword id="KW-0963">Cytoplasm</keyword>
<keyword id="KW-0456">Lyase</keyword>
<keyword id="KW-1185">Reference proteome</keyword>
<keyword id="KW-0704">Schiff base</keyword>
<proteinExistence type="inferred from homology"/>
<organism>
    <name type="scientific">Methanothermobacter thermautotrophicus (strain ATCC 29096 / DSM 1053 / JCM 10044 / NBRC 100330 / Delta H)</name>
    <name type="common">Methanobacterium thermoautotrophicum</name>
    <dbReference type="NCBI Taxonomy" id="187420"/>
    <lineage>
        <taxon>Archaea</taxon>
        <taxon>Methanobacteriati</taxon>
        <taxon>Methanobacteriota</taxon>
        <taxon>Methanomada group</taxon>
        <taxon>Methanobacteria</taxon>
        <taxon>Methanobacteriales</taxon>
        <taxon>Methanobacteriaceae</taxon>
        <taxon>Methanothermobacter</taxon>
    </lineage>
</organism>
<evidence type="ECO:0000255" key="1">
    <source>
        <dbReference type="HAMAP-Rule" id="MF_00114"/>
    </source>
</evidence>
<evidence type="ECO:0000305" key="2"/>
<gene>
    <name evidence="1" type="primary">deoC</name>
    <name type="ordered locus">MTH_818</name>
</gene>
<dbReference type="EC" id="4.1.2.4" evidence="1"/>
<dbReference type="EMBL" id="AE000666">
    <property type="protein sequence ID" value="AAB85318.1"/>
    <property type="molecule type" value="Genomic_DNA"/>
</dbReference>
<dbReference type="PIR" id="C69209">
    <property type="entry name" value="C69209"/>
</dbReference>
<dbReference type="SMR" id="O26909"/>
<dbReference type="STRING" id="187420.MTH_818"/>
<dbReference type="PaxDb" id="187420-MTH_818"/>
<dbReference type="EnsemblBacteria" id="AAB85318">
    <property type="protein sequence ID" value="AAB85318"/>
    <property type="gene ID" value="MTH_818"/>
</dbReference>
<dbReference type="KEGG" id="mth:MTH_818"/>
<dbReference type="PATRIC" id="fig|187420.15.peg.803"/>
<dbReference type="HOGENOM" id="CLU_053595_0_2_2"/>
<dbReference type="InParanoid" id="O26909"/>
<dbReference type="UniPathway" id="UPA00002">
    <property type="reaction ID" value="UER00468"/>
</dbReference>
<dbReference type="Proteomes" id="UP000005223">
    <property type="component" value="Chromosome"/>
</dbReference>
<dbReference type="GO" id="GO:0005737">
    <property type="term" value="C:cytoplasm"/>
    <property type="evidence" value="ECO:0007669"/>
    <property type="project" value="UniProtKB-SubCell"/>
</dbReference>
<dbReference type="GO" id="GO:0004139">
    <property type="term" value="F:deoxyribose-phosphate aldolase activity"/>
    <property type="evidence" value="ECO:0007669"/>
    <property type="project" value="UniProtKB-UniRule"/>
</dbReference>
<dbReference type="GO" id="GO:0006018">
    <property type="term" value="P:2-deoxyribose 1-phosphate catabolic process"/>
    <property type="evidence" value="ECO:0007669"/>
    <property type="project" value="UniProtKB-UniRule"/>
</dbReference>
<dbReference type="GO" id="GO:0016052">
    <property type="term" value="P:carbohydrate catabolic process"/>
    <property type="evidence" value="ECO:0007669"/>
    <property type="project" value="TreeGrafter"/>
</dbReference>
<dbReference type="GO" id="GO:0009264">
    <property type="term" value="P:deoxyribonucleotide catabolic process"/>
    <property type="evidence" value="ECO:0007669"/>
    <property type="project" value="InterPro"/>
</dbReference>
<dbReference type="CDD" id="cd00959">
    <property type="entry name" value="DeoC"/>
    <property type="match status" value="1"/>
</dbReference>
<dbReference type="FunFam" id="3.20.20.70:FF:000044">
    <property type="entry name" value="Deoxyribose-phosphate aldolase"/>
    <property type="match status" value="1"/>
</dbReference>
<dbReference type="Gene3D" id="3.20.20.70">
    <property type="entry name" value="Aldolase class I"/>
    <property type="match status" value="1"/>
</dbReference>
<dbReference type="HAMAP" id="MF_00114">
    <property type="entry name" value="DeoC_type1"/>
    <property type="match status" value="1"/>
</dbReference>
<dbReference type="InterPro" id="IPR013785">
    <property type="entry name" value="Aldolase_TIM"/>
</dbReference>
<dbReference type="InterPro" id="IPR011343">
    <property type="entry name" value="DeoC"/>
</dbReference>
<dbReference type="InterPro" id="IPR002915">
    <property type="entry name" value="DeoC/FbaB/LacD_aldolase"/>
</dbReference>
<dbReference type="InterPro" id="IPR028581">
    <property type="entry name" value="DeoC_typeI"/>
</dbReference>
<dbReference type="NCBIfam" id="TIGR00126">
    <property type="entry name" value="deoC"/>
    <property type="match status" value="1"/>
</dbReference>
<dbReference type="PANTHER" id="PTHR10889">
    <property type="entry name" value="DEOXYRIBOSE-PHOSPHATE ALDOLASE"/>
    <property type="match status" value="1"/>
</dbReference>
<dbReference type="PANTHER" id="PTHR10889:SF1">
    <property type="entry name" value="DEOXYRIBOSE-PHOSPHATE ALDOLASE"/>
    <property type="match status" value="1"/>
</dbReference>
<dbReference type="Pfam" id="PF01791">
    <property type="entry name" value="DeoC"/>
    <property type="match status" value="1"/>
</dbReference>
<dbReference type="PIRSF" id="PIRSF001357">
    <property type="entry name" value="DeoC"/>
    <property type="match status" value="1"/>
</dbReference>
<dbReference type="SMART" id="SM01133">
    <property type="entry name" value="DeoC"/>
    <property type="match status" value="1"/>
</dbReference>
<dbReference type="SUPFAM" id="SSF51569">
    <property type="entry name" value="Aldolase"/>
    <property type="match status" value="1"/>
</dbReference>
<feature type="chain" id="PRO_0000057289" description="Deoxyribose-phosphate aldolase">
    <location>
        <begin position="1"/>
        <end position="224"/>
    </location>
</feature>
<feature type="active site" description="Proton donor/acceptor" evidence="1">
    <location>
        <position position="98"/>
    </location>
</feature>
<feature type="active site" description="Schiff-base intermediate with acetaldehyde" evidence="1">
    <location>
        <position position="159"/>
    </location>
</feature>
<feature type="active site" description="Proton donor/acceptor" evidence="1">
    <location>
        <position position="189"/>
    </location>
</feature>
<comment type="function">
    <text evidence="1">Catalyzes a reversible aldol reaction between acetaldehyde and D-glyceraldehyde 3-phosphate to generate 2-deoxy-D-ribose 5-phosphate.</text>
</comment>
<comment type="catalytic activity">
    <reaction evidence="1">
        <text>2-deoxy-D-ribose 5-phosphate = D-glyceraldehyde 3-phosphate + acetaldehyde</text>
        <dbReference type="Rhea" id="RHEA:12821"/>
        <dbReference type="ChEBI" id="CHEBI:15343"/>
        <dbReference type="ChEBI" id="CHEBI:59776"/>
        <dbReference type="ChEBI" id="CHEBI:62877"/>
        <dbReference type="EC" id="4.1.2.4"/>
    </reaction>
</comment>
<comment type="pathway">
    <text evidence="1">Carbohydrate degradation; 2-deoxy-D-ribose 1-phosphate degradation; D-glyceraldehyde 3-phosphate and acetaldehyde from 2-deoxy-alpha-D-ribose 1-phosphate: step 2/2.</text>
</comment>
<comment type="subcellular location">
    <subcellularLocation>
        <location evidence="1">Cytoplasm</location>
    </subcellularLocation>
</comment>
<comment type="similarity">
    <text evidence="1 2">Belongs to the DeoC/FbaB aldolase family. DeoC type 1 subfamily.</text>
</comment>
<sequence>MVKMNVETREELASLIDHTNVRADATENDIERLCREAVSYGFRCAVVTPTNVRLAAELLEGTDVTVCSVVGFPAGVSTPRVKALEASEAVENGAGEVDMVMNIGAMKSGNRELVYRDISGVVDAAGVPVKVILETAYLTDKEKVEACLISKEAGAAFVKTSTAYGGLAGATVEDVMLMRKTVGDEMGVKASGGIRDLETALAMIDAGADRIGTSTGVQIIEGWR</sequence>
<reference key="1">
    <citation type="journal article" date="1997" name="J. Bacteriol.">
        <title>Complete genome sequence of Methanobacterium thermoautotrophicum deltaH: functional analysis and comparative genomics.</title>
        <authorList>
            <person name="Smith D.R."/>
            <person name="Doucette-Stamm L.A."/>
            <person name="Deloughery C."/>
            <person name="Lee H.-M."/>
            <person name="Dubois J."/>
            <person name="Aldredge T."/>
            <person name="Bashirzadeh R."/>
            <person name="Blakely D."/>
            <person name="Cook R."/>
            <person name="Gilbert K."/>
            <person name="Harrison D."/>
            <person name="Hoang L."/>
            <person name="Keagle P."/>
            <person name="Lumm W."/>
            <person name="Pothier B."/>
            <person name="Qiu D."/>
            <person name="Spadafora R."/>
            <person name="Vicare R."/>
            <person name="Wang Y."/>
            <person name="Wierzbowski J."/>
            <person name="Gibson R."/>
            <person name="Jiwani N."/>
            <person name="Caruso A."/>
            <person name="Bush D."/>
            <person name="Safer H."/>
            <person name="Patwell D."/>
            <person name="Prabhakar S."/>
            <person name="McDougall S."/>
            <person name="Shimer G."/>
            <person name="Goyal A."/>
            <person name="Pietrovski S."/>
            <person name="Church G.M."/>
            <person name="Daniels C.J."/>
            <person name="Mao J.-I."/>
            <person name="Rice P."/>
            <person name="Noelling J."/>
            <person name="Reeve J.N."/>
        </authorList>
    </citation>
    <scope>NUCLEOTIDE SEQUENCE [LARGE SCALE GENOMIC DNA]</scope>
    <source>
        <strain>ATCC 29096 / DSM 1053 / JCM 10044 / NBRC 100330 / Delta H</strain>
    </source>
</reference>
<accession>O26909</accession>
<protein>
    <recommendedName>
        <fullName evidence="1">Deoxyribose-phosphate aldolase</fullName>
        <shortName evidence="1">DERA</shortName>
        <ecNumber evidence="1">4.1.2.4</ecNumber>
    </recommendedName>
    <alternativeName>
        <fullName evidence="1">2-deoxy-D-ribose 5-phosphate aldolase</fullName>
    </alternativeName>
    <alternativeName>
        <fullName evidence="1">Phosphodeoxyriboaldolase</fullName>
        <shortName evidence="1">Deoxyriboaldolase</shortName>
    </alternativeName>
</protein>